<dbReference type="EC" id="2.4.1.16" evidence="10"/>
<dbReference type="EMBL" id="CP003825">
    <property type="protein sequence ID" value="AFR95603.2"/>
    <property type="molecule type" value="Genomic_DNA"/>
</dbReference>
<dbReference type="RefSeq" id="XP_012049807.1">
    <property type="nucleotide sequence ID" value="XM_012194417.1"/>
</dbReference>
<dbReference type="SMR" id="J9VMX7"/>
<dbReference type="GlyCosmos" id="J9VMX7">
    <property type="glycosylation" value="5 sites, No reported glycans"/>
</dbReference>
<dbReference type="GeneID" id="23885872"/>
<dbReference type="KEGG" id="cng:CNAG_02217"/>
<dbReference type="VEuPathDB" id="FungiDB:CNAG_02217"/>
<dbReference type="HOGENOM" id="CLU_004760_3_1_1"/>
<dbReference type="OrthoDB" id="2748at5206"/>
<dbReference type="Proteomes" id="UP000010091">
    <property type="component" value="Chromosome 6"/>
</dbReference>
<dbReference type="GO" id="GO:0030428">
    <property type="term" value="C:cell septum"/>
    <property type="evidence" value="ECO:0007669"/>
    <property type="project" value="TreeGrafter"/>
</dbReference>
<dbReference type="GO" id="GO:0005886">
    <property type="term" value="C:plasma membrane"/>
    <property type="evidence" value="ECO:0007669"/>
    <property type="project" value="UniProtKB-SubCell"/>
</dbReference>
<dbReference type="GO" id="GO:0004100">
    <property type="term" value="F:chitin synthase activity"/>
    <property type="evidence" value="ECO:0000250"/>
    <property type="project" value="UniProtKB"/>
</dbReference>
<dbReference type="GO" id="GO:0071555">
    <property type="term" value="P:cell wall organization"/>
    <property type="evidence" value="ECO:0007669"/>
    <property type="project" value="UniProtKB-KW"/>
</dbReference>
<dbReference type="GO" id="GO:0006031">
    <property type="term" value="P:chitin biosynthetic process"/>
    <property type="evidence" value="ECO:0000250"/>
    <property type="project" value="UniProtKB"/>
</dbReference>
<dbReference type="CDD" id="cd04190">
    <property type="entry name" value="Chitin_synth_C"/>
    <property type="match status" value="1"/>
</dbReference>
<dbReference type="InterPro" id="IPR004835">
    <property type="entry name" value="Chitin_synth"/>
</dbReference>
<dbReference type="InterPro" id="IPR004834">
    <property type="entry name" value="Chitin_synth_fun"/>
</dbReference>
<dbReference type="InterPro" id="IPR013616">
    <property type="entry name" value="Chitin_synth_N"/>
</dbReference>
<dbReference type="InterPro" id="IPR029044">
    <property type="entry name" value="Nucleotide-diphossugar_trans"/>
</dbReference>
<dbReference type="PANTHER" id="PTHR22914">
    <property type="entry name" value="CHITIN SYNTHASE"/>
    <property type="match status" value="1"/>
</dbReference>
<dbReference type="PANTHER" id="PTHR22914:SF11">
    <property type="entry name" value="CHITIN SYNTHASE B"/>
    <property type="match status" value="1"/>
</dbReference>
<dbReference type="Pfam" id="PF01644">
    <property type="entry name" value="Chitin_synth_1"/>
    <property type="match status" value="1"/>
</dbReference>
<dbReference type="Pfam" id="PF08407">
    <property type="entry name" value="Chitin_synth_1N"/>
    <property type="match status" value="1"/>
</dbReference>
<dbReference type="SUPFAM" id="SSF53448">
    <property type="entry name" value="Nucleotide-diphospho-sugar transferases"/>
    <property type="match status" value="1"/>
</dbReference>
<proteinExistence type="evidence at transcript level"/>
<protein>
    <recommendedName>
        <fullName evidence="8">Chitin synthase 7</fullName>
        <ecNumber evidence="10">2.4.1.16</ecNumber>
    </recommendedName>
    <alternativeName>
        <fullName evidence="9">Chitin-UDP acetyl-glucosaminyl transferase 7</fullName>
    </alternativeName>
    <alternativeName>
        <fullName evidence="8">Class-III chitin synthase 7</fullName>
    </alternativeName>
</protein>
<gene>
    <name evidence="8" type="primary">CHS7</name>
    <name type="ORF">CNAG_02217</name>
</gene>
<feature type="chain" id="PRO_0000451816" description="Chitin synthase 7">
    <location>
        <begin position="1"/>
        <end position="931"/>
    </location>
</feature>
<feature type="transmembrane region" description="Helical" evidence="1">
    <location>
        <begin position="573"/>
        <end position="593"/>
    </location>
</feature>
<feature type="transmembrane region" description="Helical" evidence="1">
    <location>
        <begin position="615"/>
        <end position="635"/>
    </location>
</feature>
<feature type="transmembrane region" description="Helical" evidence="1">
    <location>
        <begin position="647"/>
        <end position="667"/>
    </location>
</feature>
<feature type="transmembrane region" description="Helical" evidence="1">
    <location>
        <begin position="695"/>
        <end position="715"/>
    </location>
</feature>
<feature type="transmembrane region" description="Helical" evidence="1">
    <location>
        <begin position="725"/>
        <end position="745"/>
    </location>
</feature>
<feature type="transmembrane region" description="Helical" evidence="1">
    <location>
        <begin position="826"/>
        <end position="846"/>
    </location>
</feature>
<feature type="transmembrane region" description="Helical" evidence="1">
    <location>
        <begin position="899"/>
        <end position="919"/>
    </location>
</feature>
<feature type="region of interest" description="Disordered" evidence="4">
    <location>
        <begin position="1"/>
        <end position="34"/>
    </location>
</feature>
<feature type="region of interest" description="Disordered" evidence="4">
    <location>
        <begin position="56"/>
        <end position="92"/>
    </location>
</feature>
<feature type="region of interest" description="Disordered" evidence="4">
    <location>
        <begin position="763"/>
        <end position="789"/>
    </location>
</feature>
<feature type="compositionally biased region" description="Polar residues" evidence="4">
    <location>
        <begin position="7"/>
        <end position="28"/>
    </location>
</feature>
<feature type="compositionally biased region" description="Polar residues" evidence="4">
    <location>
        <begin position="83"/>
        <end position="92"/>
    </location>
</feature>
<feature type="glycosylation site" description="N-linked (GlcNAc...) asparagine" evidence="2">
    <location>
        <position position="536"/>
    </location>
</feature>
<feature type="glycosylation site" description="N-linked (GlcNAc...) asparagine" evidence="2">
    <location>
        <position position="691"/>
    </location>
</feature>
<feature type="glycosylation site" description="N-linked (GlcNAc...) asparagine" evidence="2">
    <location>
        <position position="819"/>
    </location>
</feature>
<feature type="glycosylation site" description="N-linked (GlcNAc...) asparagine" evidence="2">
    <location>
        <position position="866"/>
    </location>
</feature>
<feature type="glycosylation site" description="N-linked (GlcNAc...) asparagine" evidence="2">
    <location>
        <position position="874"/>
    </location>
</feature>
<accession>J9VMX7</accession>
<organism>
    <name type="scientific">Cryptococcus neoformans var. grubii serotype A (strain H99 / ATCC 208821 / CBS 10515 / FGSC 9487)</name>
    <name type="common">Filobasidiella neoformans var. grubii</name>
    <dbReference type="NCBI Taxonomy" id="235443"/>
    <lineage>
        <taxon>Eukaryota</taxon>
        <taxon>Fungi</taxon>
        <taxon>Dikarya</taxon>
        <taxon>Basidiomycota</taxon>
        <taxon>Agaricomycotina</taxon>
        <taxon>Tremellomycetes</taxon>
        <taxon>Tremellales</taxon>
        <taxon>Cryptococcaceae</taxon>
        <taxon>Cryptococcus</taxon>
        <taxon>Cryptococcus neoformans species complex</taxon>
    </lineage>
</organism>
<reference key="1">
    <citation type="journal article" date="2014" name="PLoS Genet.">
        <title>Analysis of the genome and transcriptome of Cryptococcus neoformans var. grubii reveals complex RNA expression and microevolution leading to virulence attenuation.</title>
        <authorList>
            <person name="Janbon G."/>
            <person name="Ormerod K.L."/>
            <person name="Paulet D."/>
            <person name="Byrnes E.J. III"/>
            <person name="Yadav V."/>
            <person name="Chatterjee G."/>
            <person name="Mullapudi N."/>
            <person name="Hon C.-C."/>
            <person name="Billmyre R.B."/>
            <person name="Brunel F."/>
            <person name="Bahn Y.-S."/>
            <person name="Chen W."/>
            <person name="Chen Y."/>
            <person name="Chow E.W.L."/>
            <person name="Coppee J.-Y."/>
            <person name="Floyd-Averette A."/>
            <person name="Gaillardin C."/>
            <person name="Gerik K.J."/>
            <person name="Goldberg J."/>
            <person name="Gonzalez-Hilarion S."/>
            <person name="Gujja S."/>
            <person name="Hamlin J.L."/>
            <person name="Hsueh Y.-P."/>
            <person name="Ianiri G."/>
            <person name="Jones S."/>
            <person name="Kodira C.D."/>
            <person name="Kozubowski L."/>
            <person name="Lam W."/>
            <person name="Marra M."/>
            <person name="Mesner L.D."/>
            <person name="Mieczkowski P.A."/>
            <person name="Moyrand F."/>
            <person name="Nielsen K."/>
            <person name="Proux C."/>
            <person name="Rossignol T."/>
            <person name="Schein J.E."/>
            <person name="Sun S."/>
            <person name="Wollschlaeger C."/>
            <person name="Wood I.A."/>
            <person name="Zeng Q."/>
            <person name="Neuveglise C."/>
            <person name="Newlon C.S."/>
            <person name="Perfect J.R."/>
            <person name="Lodge J.K."/>
            <person name="Idnurm A."/>
            <person name="Stajich J.E."/>
            <person name="Kronstad J.W."/>
            <person name="Sanyal K."/>
            <person name="Heitman J."/>
            <person name="Fraser J.A."/>
            <person name="Cuomo C.A."/>
            <person name="Dietrich F.S."/>
        </authorList>
    </citation>
    <scope>NUCLEOTIDE SEQUENCE [LARGE SCALE GENOMIC DNA]</scope>
    <source>
        <strain>H99 / ATCC 208821 / CBS 10515 / FGSC 9487</strain>
    </source>
</reference>
<reference key="2">
    <citation type="journal article" date="2005" name="Eukaryot. Cell">
        <title>A chitin synthase and its regulator protein are critical for chitosan production and growth of the fungal pathogen Cryptococcus neoformans.</title>
        <authorList>
            <person name="Banks I.R."/>
            <person name="Specht C.A."/>
            <person name="Donlin M.J."/>
            <person name="Gerik K.J."/>
            <person name="Levitz S.M."/>
            <person name="Lodge J.K."/>
        </authorList>
    </citation>
    <scope>FUNCTION</scope>
</reference>
<reference key="3">
    <citation type="journal article" date="2016" name="PLoS Pathog.">
        <title>Calcineurin Targets Involved in Stress Survival and Fungal Virulence.</title>
        <authorList>
            <person name="Park H.S."/>
            <person name="Chow E.W."/>
            <person name="Fu C."/>
            <person name="Soderblom E.J."/>
            <person name="Moseley M.A."/>
            <person name="Heitman J."/>
            <person name="Cardenas M.E."/>
        </authorList>
    </citation>
    <scope>INDUCTION</scope>
</reference>
<reference key="4">
    <citation type="journal article" date="2018" name="Cell Surf.">
        <title>Lack of chitin synthase genes impacts capsular architecture and cellular physiology in Cryptococcus neoformans.</title>
        <authorList>
            <person name="Rodrigues J."/>
            <person name="Ramos C.L."/>
            <person name="Frases S."/>
            <person name="Godinho R.M.D.C."/>
            <person name="Fonseca F.L."/>
            <person name="Rodrigues M.L."/>
        </authorList>
    </citation>
    <scope>DISRUPTION PHENOTYPE</scope>
</reference>
<reference key="5">
    <citation type="journal article" date="2019" name="Genetics">
        <title>Roles for Stress Response and Cell Wall Biosynthesis Pathways in Caspofungin Tolerance in Cryptococcus neoformans.</title>
        <authorList>
            <person name="Pianalto K.M."/>
            <person name="Billmyre R.B."/>
            <person name="Telzrow C.L."/>
            <person name="Alspaugh J.A."/>
        </authorList>
    </citation>
    <scope>INDUCTION</scope>
</reference>
<name>CHIS7_CRYNH</name>
<evidence type="ECO:0000255" key="1"/>
<evidence type="ECO:0000255" key="2">
    <source>
        <dbReference type="PROSITE-ProRule" id="PRU00498"/>
    </source>
</evidence>
<evidence type="ECO:0000255" key="3">
    <source>
        <dbReference type="RuleBase" id="RU366040"/>
    </source>
</evidence>
<evidence type="ECO:0000256" key="4">
    <source>
        <dbReference type="SAM" id="MobiDB-lite"/>
    </source>
</evidence>
<evidence type="ECO:0000269" key="5">
    <source>
    </source>
</evidence>
<evidence type="ECO:0000269" key="6">
    <source>
    </source>
</evidence>
<evidence type="ECO:0000269" key="7">
    <source>
    </source>
</evidence>
<evidence type="ECO:0000303" key="8">
    <source>
    </source>
</evidence>
<evidence type="ECO:0000305" key="9"/>
<evidence type="ECO:0000305" key="10">
    <source>
    </source>
</evidence>
<sequence length="931" mass="104529">MVRHDPFTNSVSEDSSFTPSVNPSTPYPQSGHYRPYYPPQLTYCQGQQGYQYDHTGDVGYGGRSRRHGSWASVNNEDNEELTPLTTGPASSSTFLTTDPYLSGGPDLPLSSSSASISSAGADFLRRQTVPRRGATIKKIKLTNGNFIADYPVPGPVSSSVEAKWLNDKTSNEFWHMRYTAATCDPDDFTPENGWKLKTTSYNRETELLVAITSYNEDKILYARTLHNVMLNIRDICNTKASKFWRRSAEEGRPGWQKIVVALVADGLDPMDKQVLDVLQTIGVFQDGILKKEVDGKKTAAHIFEYTTQLSIDATPQLVQPHPGDPNNLVPVQIIFVLKQENSKKINSHRWLFNALGRQLQPEICVLLDAGTKPGHKAIYHLWEAFYNNQNLGGACGEIHAMIKKGVKLLNPLVAAQNFEYKMSNILDKPLESSFGYVSVLPGAFSAYRYKAIQGRPLTQYFHGDATLAARLGKKGIYGMGIFTKNMFLAEDRILCFELVAKKGEKWVLQYVKPSKAETDVPEQAAELISQRRRWLNGSFAASVYSVFHFFRLYRSGHGPIRMLFLHIQAIYNIFSLIFSWFALANLWLTFSIIIELLPESANINLFGTADITHWINLVFAWVYLAFLMLQLVLALGNRPKAEKGLYILTLWVYAFLSFYLIVCSIILSVVAFKGALRDGGSIGAKLGNLFNSTNGVLVAAIMSTIGIYLIASFLYRDPWHMFSSFPQYMLLAPSFTNVLNIYAFCNLHDVSWGTKGSDRAESLPAISSSKQKDGETAVVEEQQRSQGELDESFKQVVRRAVAPYKPEDADEKPNLDDQNRTFRTRLVVVWLLTNAALAISIQTLNGLDTTKPLVEACLPNSYNPENGTVIVSTNGTCITQALEHDGDKLQDKQQIYFQAILWTTFALSMVRFIGCVFYWAMRQMGRCWRRN</sequence>
<comment type="function">
    <text evidence="10">Polymerizes chitin, a structural polymer of the cell wall and septum, by transferring the sugar moiety of UDP-GlcNAc to the non-reducing end of the growing chitin polymer.</text>
</comment>
<comment type="catalytic activity">
    <reaction evidence="3">
        <text>[(1-&gt;4)-N-acetyl-beta-D-glucosaminyl](n) + UDP-N-acetyl-alpha-D-glucosamine = [(1-&gt;4)-N-acetyl-beta-D-glucosaminyl](n+1) + UDP + H(+)</text>
        <dbReference type="Rhea" id="RHEA:16637"/>
        <dbReference type="Rhea" id="RHEA-COMP:9593"/>
        <dbReference type="Rhea" id="RHEA-COMP:9595"/>
        <dbReference type="ChEBI" id="CHEBI:15378"/>
        <dbReference type="ChEBI" id="CHEBI:17029"/>
        <dbReference type="ChEBI" id="CHEBI:57705"/>
        <dbReference type="ChEBI" id="CHEBI:58223"/>
        <dbReference type="EC" id="2.4.1.16"/>
    </reaction>
</comment>
<comment type="subcellular location">
    <subcellularLocation>
        <location evidence="9">Cell membrane</location>
        <topology evidence="3">Multi-pass membrane protein</topology>
    </subcellularLocation>
</comment>
<comment type="induction">
    <text evidence="5 6">Induced by high temperature (PubMed:27611567). Induced by the antifungal agent caspofungin (PubMed:31266771).</text>
</comment>
<comment type="disruption phenotype">
    <text evidence="7">Decreases capsular diameter (PubMed:32743128). Decreases extracellular vesicle secretion (PubMed:32743128).</text>
</comment>
<comment type="similarity">
    <text evidence="9">Belongs to the chitin synthase family. Class III subfamily.</text>
</comment>
<keyword id="KW-1003">Cell membrane</keyword>
<keyword id="KW-0961">Cell wall biogenesis/degradation</keyword>
<keyword id="KW-0325">Glycoprotein</keyword>
<keyword id="KW-0328">Glycosyltransferase</keyword>
<keyword id="KW-0472">Membrane</keyword>
<keyword id="KW-0808">Transferase</keyword>
<keyword id="KW-0812">Transmembrane</keyword>
<keyword id="KW-1133">Transmembrane helix</keyword>